<comment type="catalytic activity">
    <reaction>
        <text>O-phospho-L-seryl-[protein] + H2O = L-seryl-[protein] + phosphate</text>
        <dbReference type="Rhea" id="RHEA:20629"/>
        <dbReference type="Rhea" id="RHEA-COMP:9863"/>
        <dbReference type="Rhea" id="RHEA-COMP:11604"/>
        <dbReference type="ChEBI" id="CHEBI:15377"/>
        <dbReference type="ChEBI" id="CHEBI:29999"/>
        <dbReference type="ChEBI" id="CHEBI:43474"/>
        <dbReference type="ChEBI" id="CHEBI:83421"/>
        <dbReference type="EC" id="3.1.3.16"/>
    </reaction>
</comment>
<comment type="catalytic activity">
    <reaction>
        <text>O-phospho-L-threonyl-[protein] + H2O = L-threonyl-[protein] + phosphate</text>
        <dbReference type="Rhea" id="RHEA:47004"/>
        <dbReference type="Rhea" id="RHEA-COMP:11060"/>
        <dbReference type="Rhea" id="RHEA-COMP:11605"/>
        <dbReference type="ChEBI" id="CHEBI:15377"/>
        <dbReference type="ChEBI" id="CHEBI:30013"/>
        <dbReference type="ChEBI" id="CHEBI:43474"/>
        <dbReference type="ChEBI" id="CHEBI:61977"/>
        <dbReference type="EC" id="3.1.3.16"/>
    </reaction>
</comment>
<comment type="cofactor">
    <cofactor evidence="1">
        <name>Mg(2+)</name>
        <dbReference type="ChEBI" id="CHEBI:18420"/>
    </cofactor>
    <cofactor evidence="1">
        <name>Mn(2+)</name>
        <dbReference type="ChEBI" id="CHEBI:29035"/>
    </cofactor>
    <text evidence="1">Binds 2 magnesium or manganese ions per subunit.</text>
</comment>
<comment type="similarity">
    <text evidence="4">Belongs to the PP2C family.</text>
</comment>
<gene>
    <name type="ordered locus">Os11g0417400</name>
    <name type="ordered locus">LOC_Os11g22404</name>
</gene>
<keyword id="KW-0378">Hydrolase</keyword>
<keyword id="KW-0460">Magnesium</keyword>
<keyword id="KW-0464">Manganese</keyword>
<keyword id="KW-0479">Metal-binding</keyword>
<keyword id="KW-0904">Protein phosphatase</keyword>
<keyword id="KW-1185">Reference proteome</keyword>
<reference key="1">
    <citation type="journal article" date="2005" name="BMC Biol.">
        <title>The sequence of rice chromosomes 11 and 12, rich in disease resistance genes and recent gene duplications.</title>
        <authorList>
            <consortium name="The rice chromosomes 11 and 12 sequencing consortia"/>
        </authorList>
    </citation>
    <scope>NUCLEOTIDE SEQUENCE [LARGE SCALE GENOMIC DNA]</scope>
    <source>
        <strain>cv. Nipponbare</strain>
    </source>
</reference>
<reference key="2">
    <citation type="journal article" date="2005" name="Nature">
        <title>The map-based sequence of the rice genome.</title>
        <authorList>
            <consortium name="International rice genome sequencing project (IRGSP)"/>
        </authorList>
    </citation>
    <scope>NUCLEOTIDE SEQUENCE [LARGE SCALE GENOMIC DNA]</scope>
    <source>
        <strain>cv. Nipponbare</strain>
    </source>
</reference>
<reference key="3">
    <citation type="journal article" date="2008" name="Nucleic Acids Res.">
        <title>The rice annotation project database (RAP-DB): 2008 update.</title>
        <authorList>
            <consortium name="The rice annotation project (RAP)"/>
        </authorList>
    </citation>
    <scope>GENOME REANNOTATION</scope>
    <source>
        <strain>cv. Nipponbare</strain>
    </source>
</reference>
<reference key="4">
    <citation type="journal article" date="2013" name="Rice">
        <title>Improvement of the Oryza sativa Nipponbare reference genome using next generation sequence and optical map data.</title>
        <authorList>
            <person name="Kawahara Y."/>
            <person name="de la Bastide M."/>
            <person name="Hamilton J.P."/>
            <person name="Kanamori H."/>
            <person name="McCombie W.R."/>
            <person name="Ouyang S."/>
            <person name="Schwartz D.C."/>
            <person name="Tanaka T."/>
            <person name="Wu J."/>
            <person name="Zhou S."/>
            <person name="Childs K.L."/>
            <person name="Davidson R.M."/>
            <person name="Lin H."/>
            <person name="Quesada-Ocampo L."/>
            <person name="Vaillancourt B."/>
            <person name="Sakai H."/>
            <person name="Lee S.S."/>
            <person name="Kim J."/>
            <person name="Numa H."/>
            <person name="Itoh T."/>
            <person name="Buell C.R."/>
            <person name="Matsumoto T."/>
        </authorList>
    </citation>
    <scope>GENOME REANNOTATION</scope>
    <source>
        <strain>cv. Nipponbare</strain>
    </source>
</reference>
<reference key="5">
    <citation type="journal article" date="2003" name="Science">
        <title>Collection, mapping, and annotation of over 28,000 cDNA clones from japonica rice.</title>
        <authorList>
            <consortium name="The rice full-length cDNA consortium"/>
        </authorList>
    </citation>
    <scope>NUCLEOTIDE SEQUENCE [LARGE SCALE MRNA]</scope>
    <source>
        <strain>cv. Nipponbare</strain>
    </source>
</reference>
<reference key="6">
    <citation type="journal article" date="2008" name="BMC Genomics">
        <title>Genome-wide and expression analysis of protein phosphatase 2C in rice and Arabidopsis.</title>
        <authorList>
            <person name="Xue T."/>
            <person name="Wang D."/>
            <person name="Zhang S."/>
            <person name="Ehlting J."/>
            <person name="Ni F."/>
            <person name="Jacab S."/>
            <person name="Zheng C."/>
            <person name="Zhong Y."/>
        </authorList>
    </citation>
    <scope>GENE FAMILY</scope>
    <scope>NOMENCLATURE</scope>
</reference>
<organism>
    <name type="scientific">Oryza sativa subsp. japonica</name>
    <name type="common">Rice</name>
    <dbReference type="NCBI Taxonomy" id="39947"/>
    <lineage>
        <taxon>Eukaryota</taxon>
        <taxon>Viridiplantae</taxon>
        <taxon>Streptophyta</taxon>
        <taxon>Embryophyta</taxon>
        <taxon>Tracheophyta</taxon>
        <taxon>Spermatophyta</taxon>
        <taxon>Magnoliopsida</taxon>
        <taxon>Liliopsida</taxon>
        <taxon>Poales</taxon>
        <taxon>Poaceae</taxon>
        <taxon>BOP clade</taxon>
        <taxon>Oryzoideae</taxon>
        <taxon>Oryzeae</taxon>
        <taxon>Oryzinae</taxon>
        <taxon>Oryza</taxon>
        <taxon>Oryza sativa</taxon>
    </lineage>
</organism>
<name>P2C75_ORYSJ</name>
<evidence type="ECO:0000250" key="1"/>
<evidence type="ECO:0000255" key="2">
    <source>
        <dbReference type="PROSITE-ProRule" id="PRU01082"/>
    </source>
</evidence>
<evidence type="ECO:0000256" key="3">
    <source>
        <dbReference type="SAM" id="MobiDB-lite"/>
    </source>
</evidence>
<evidence type="ECO:0000305" key="4"/>
<sequence>MGTCLTTAEQRAMEVPAASVKGGGGRRSDEEAPGRIAGNGAGNVACLFTRQGKKGTNQDAMVAWENYNGRSDTVFCGVFDGHGPHGHLIARKVRDILPSRLCDLIYEDCGDSPTSNSDVSTLEENLSPYADAECRSPTLAGQKEHQEFFNAMKESFRKAFKNVDKELKLQRNIDSICSGTTAVTLIKQGHDLIVGNLGDSRAVLGTRDQNDKLVAHQLTVDLKPDHPREARRIRRCNGRVFAHQDEPDVARLWLPNCNSPGLAMARAFGDFCLKDFGLISVPDVTYRQITEKDEFIVLATDGVWDVLSNQEVVDVVASCSGRFAAARSVVDLANETWRFKYPTSKTDDCAVVCLFLNKYEVTGGLSGQPGYSPRMPALSGITRPNSKRVTPDDVDDGSDSNVSGDERSLDGFTRLNTLLALPKFGDTSPTKK</sequence>
<proteinExistence type="evidence at transcript level"/>
<accession>Q2R637</accession>
<accession>A0A0P0Y256</accession>
<accession>Q0IT39</accession>
<protein>
    <recommendedName>
        <fullName>Probable protein phosphatase 2C 75</fullName>
        <shortName>OsPP2C75</shortName>
        <ecNumber>3.1.3.16</ecNumber>
    </recommendedName>
</protein>
<dbReference type="EC" id="3.1.3.16"/>
<dbReference type="EMBL" id="DP000010">
    <property type="protein sequence ID" value="ABA93159.2"/>
    <property type="molecule type" value="Genomic_DNA"/>
</dbReference>
<dbReference type="EMBL" id="AP008217">
    <property type="protein sequence ID" value="BAF28126.2"/>
    <property type="molecule type" value="Genomic_DNA"/>
</dbReference>
<dbReference type="EMBL" id="AP014967">
    <property type="protein sequence ID" value="BAT13771.1"/>
    <property type="molecule type" value="Genomic_DNA"/>
</dbReference>
<dbReference type="EMBL" id="AK070536">
    <property type="protein sequence ID" value="BAG92015.1"/>
    <property type="molecule type" value="mRNA"/>
</dbReference>
<dbReference type="RefSeq" id="XP_015617585.1">
    <property type="nucleotide sequence ID" value="XM_015762099.1"/>
</dbReference>
<dbReference type="RefSeq" id="XP_015617586.1">
    <property type="nucleotide sequence ID" value="XM_015762100.1"/>
</dbReference>
<dbReference type="RefSeq" id="XP_015617587.1">
    <property type="nucleotide sequence ID" value="XM_015762101.1"/>
</dbReference>
<dbReference type="RefSeq" id="XP_015617588.1">
    <property type="nucleotide sequence ID" value="XM_015762102.1"/>
</dbReference>
<dbReference type="RefSeq" id="XP_015617589.1">
    <property type="nucleotide sequence ID" value="XM_015762103.1"/>
</dbReference>
<dbReference type="RefSeq" id="XP_015617590.1">
    <property type="nucleotide sequence ID" value="XM_015762104.1"/>
</dbReference>
<dbReference type="RefSeq" id="XP_015617591.1">
    <property type="nucleotide sequence ID" value="XM_015762105.1"/>
</dbReference>
<dbReference type="RefSeq" id="XP_015617592.1">
    <property type="nucleotide sequence ID" value="XM_015762106.1"/>
</dbReference>
<dbReference type="RefSeq" id="XP_015617593.1">
    <property type="nucleotide sequence ID" value="XM_015762107.1"/>
</dbReference>
<dbReference type="RefSeq" id="XP_015617594.1">
    <property type="nucleotide sequence ID" value="XM_015762108.1"/>
</dbReference>
<dbReference type="RefSeq" id="XP_015617595.1">
    <property type="nucleotide sequence ID" value="XM_015762109.1"/>
</dbReference>
<dbReference type="RefSeq" id="XP_015617596.1">
    <property type="nucleotide sequence ID" value="XM_015762110.1"/>
</dbReference>
<dbReference type="RefSeq" id="XP_015617598.1">
    <property type="nucleotide sequence ID" value="XM_015762112.1"/>
</dbReference>
<dbReference type="RefSeq" id="XP_015617599.1">
    <property type="nucleotide sequence ID" value="XM_015762113.1"/>
</dbReference>
<dbReference type="RefSeq" id="XP_015617600.1">
    <property type="nucleotide sequence ID" value="XM_015762114.1"/>
</dbReference>
<dbReference type="SMR" id="Q2R637"/>
<dbReference type="FunCoup" id="Q2R637">
    <property type="interactions" value="5"/>
</dbReference>
<dbReference type="STRING" id="39947.Q2R637"/>
<dbReference type="PaxDb" id="39947-Q2R637"/>
<dbReference type="EnsemblPlants" id="Os11t0417400-01">
    <property type="protein sequence ID" value="Os11t0417400-01"/>
    <property type="gene ID" value="Os11g0417400"/>
</dbReference>
<dbReference type="Gramene" id="Os11t0417400-01">
    <property type="protein sequence ID" value="Os11t0417400-01"/>
    <property type="gene ID" value="Os11g0417400"/>
</dbReference>
<dbReference type="KEGG" id="dosa:Os11g0417400"/>
<dbReference type="eggNOG" id="KOG0698">
    <property type="taxonomic scope" value="Eukaryota"/>
</dbReference>
<dbReference type="HOGENOM" id="CLU_013173_6_0_1"/>
<dbReference type="InParanoid" id="Q2R637"/>
<dbReference type="OMA" id="ANETWRF"/>
<dbReference type="OrthoDB" id="10264738at2759"/>
<dbReference type="Proteomes" id="UP000000763">
    <property type="component" value="Chromosome 11"/>
</dbReference>
<dbReference type="Proteomes" id="UP000059680">
    <property type="component" value="Chromosome 11"/>
</dbReference>
<dbReference type="GO" id="GO:0046872">
    <property type="term" value="F:metal ion binding"/>
    <property type="evidence" value="ECO:0007669"/>
    <property type="project" value="UniProtKB-KW"/>
</dbReference>
<dbReference type="GO" id="GO:0004722">
    <property type="term" value="F:protein serine/threonine phosphatase activity"/>
    <property type="evidence" value="ECO:0000318"/>
    <property type="project" value="GO_Central"/>
</dbReference>
<dbReference type="GO" id="GO:1902531">
    <property type="term" value="P:regulation of intracellular signal transduction"/>
    <property type="evidence" value="ECO:0000318"/>
    <property type="project" value="GO_Central"/>
</dbReference>
<dbReference type="CDD" id="cd00143">
    <property type="entry name" value="PP2Cc"/>
    <property type="match status" value="1"/>
</dbReference>
<dbReference type="FunFam" id="3.60.40.10:FF:000024">
    <property type="entry name" value="probable protein phosphatase 2C 33"/>
    <property type="match status" value="1"/>
</dbReference>
<dbReference type="Gene3D" id="3.60.40.10">
    <property type="entry name" value="PPM-type phosphatase domain"/>
    <property type="match status" value="1"/>
</dbReference>
<dbReference type="InterPro" id="IPR015655">
    <property type="entry name" value="PP2C"/>
</dbReference>
<dbReference type="InterPro" id="IPR036457">
    <property type="entry name" value="PPM-type-like_dom_sf"/>
</dbReference>
<dbReference type="InterPro" id="IPR001932">
    <property type="entry name" value="PPM-type_phosphatase-like_dom"/>
</dbReference>
<dbReference type="PANTHER" id="PTHR47992">
    <property type="entry name" value="PROTEIN PHOSPHATASE"/>
    <property type="match status" value="1"/>
</dbReference>
<dbReference type="Pfam" id="PF00481">
    <property type="entry name" value="PP2C"/>
    <property type="match status" value="1"/>
</dbReference>
<dbReference type="SMART" id="SM00332">
    <property type="entry name" value="PP2Cc"/>
    <property type="match status" value="1"/>
</dbReference>
<dbReference type="SUPFAM" id="SSF81606">
    <property type="entry name" value="PP2C-like"/>
    <property type="match status" value="1"/>
</dbReference>
<dbReference type="PROSITE" id="PS51746">
    <property type="entry name" value="PPM_2"/>
    <property type="match status" value="1"/>
</dbReference>
<feature type="chain" id="PRO_0000363322" description="Probable protein phosphatase 2C 75">
    <location>
        <begin position="1"/>
        <end position="432"/>
    </location>
</feature>
<feature type="domain" description="PPM-type phosphatase" evidence="2">
    <location>
        <begin position="44"/>
        <end position="356"/>
    </location>
</feature>
<feature type="region of interest" description="Disordered" evidence="3">
    <location>
        <begin position="372"/>
        <end position="408"/>
    </location>
</feature>
<feature type="binding site" evidence="1">
    <location>
        <position position="80"/>
    </location>
    <ligand>
        <name>Mn(2+)</name>
        <dbReference type="ChEBI" id="CHEBI:29035"/>
        <label>1</label>
    </ligand>
</feature>
<feature type="binding site" evidence="1">
    <location>
        <position position="80"/>
    </location>
    <ligand>
        <name>Mn(2+)</name>
        <dbReference type="ChEBI" id="CHEBI:29035"/>
        <label>2</label>
    </ligand>
</feature>
<feature type="binding site" evidence="1">
    <location>
        <position position="81"/>
    </location>
    <ligand>
        <name>Mn(2+)</name>
        <dbReference type="ChEBI" id="CHEBI:29035"/>
        <label>1</label>
    </ligand>
</feature>
<feature type="binding site" evidence="1">
    <location>
        <position position="301"/>
    </location>
    <ligand>
        <name>Mn(2+)</name>
        <dbReference type="ChEBI" id="CHEBI:29035"/>
        <label>2</label>
    </ligand>
</feature>
<feature type="binding site" evidence="1">
    <location>
        <position position="347"/>
    </location>
    <ligand>
        <name>Mn(2+)</name>
        <dbReference type="ChEBI" id="CHEBI:29035"/>
        <label>2</label>
    </ligand>
</feature>